<evidence type="ECO:0000255" key="1">
    <source>
        <dbReference type="PROSITE-ProRule" id="PRU01020"/>
    </source>
</evidence>
<evidence type="ECO:0000269" key="2">
    <source>
    </source>
</evidence>
<sequence length="358" mass="39629">MASHDQEAFLTAMQIVNSSAVDGVLICLIELNVFDIMMQKAGMDGYLHPDEIALNLPTKNPQAPEMLDRMLRILASHSIIKCKLVKKMSGNALLTRAYGLTLISQYFVNAQDGPCLAPYLKLIHHKQMQNSWEKVNEAVLEGGYAFNKAHAGSTFFEYLGKDKSVAELLSQTMAKSIPTSMNILLKSYKGFEGVKEVVDVGGAYAATLSCIISFNPHVKGINFDVPHVIKNAPSLPGITHVGGDMFESVPRGEAIVLQRVLHDWTDEESVKILKKCYEAIPDHGKVVIIEMIQTEMPEDDIIAKNISEMDIRMLLYTPGGKERTVNEFLMLGKQAGFPSSKYICGADLYGVVELYKKK</sequence>
<proteinExistence type="evidence at protein level"/>
<name>AIMT1_PIMAN</name>
<comment type="function">
    <text evidence="2">Phenylpropene O-methyltransferase that catalyzes the conversion of trans-anol to trans-anethole and isoeugenol to isomethyleugenol. Phenylpropenes are the primary constituents of various essential plant oils. They are produced as antimicrobial and antianimal compounds, or as floral attractants of pollinators.</text>
</comment>
<comment type="catalytic activity">
    <reaction evidence="2">
        <text>(E)-anol + S-adenosyl-L-methionine = (E)-anethole + S-adenosyl-L-homocysteine + H(+)</text>
        <dbReference type="Rhea" id="RHEA:36247"/>
        <dbReference type="ChEBI" id="CHEBI:15378"/>
        <dbReference type="ChEBI" id="CHEBI:35616"/>
        <dbReference type="ChEBI" id="CHEBI:57856"/>
        <dbReference type="ChEBI" id="CHEBI:59789"/>
        <dbReference type="ChEBI" id="CHEBI:73343"/>
        <dbReference type="EC" id="2.1.1.279"/>
    </reaction>
</comment>
<comment type="catalytic activity">
    <reaction evidence="2">
        <text>(E)-isoeugenol + S-adenosyl-L-methionine = (E)-isomethyleugenol + S-adenosyl-L-homocysteine + H(+)</text>
        <dbReference type="Rhea" id="RHEA:17081"/>
        <dbReference type="ChEBI" id="CHEBI:6877"/>
        <dbReference type="ChEBI" id="CHEBI:15378"/>
        <dbReference type="ChEBI" id="CHEBI:50545"/>
        <dbReference type="ChEBI" id="CHEBI:57856"/>
        <dbReference type="ChEBI" id="CHEBI:59789"/>
        <dbReference type="EC" id="2.1.1.279"/>
    </reaction>
</comment>
<comment type="activity regulation">
    <text evidence="2">Inhibited by zinc and copper.</text>
</comment>
<comment type="biophysicochemical properties">
    <kinetics>
        <KM evidence="2">19.3 uM for isoeugenol (at pH 7.5 and 25 degrees Celsius)</KM>
        <KM evidence="2">54.5 uM for S-adenosyl-L-methionine (at pH 7.5 and 25 degrees Celsius)</KM>
        <text>kcat is 0.015 sec(-1) for isoeugenol.</text>
    </kinetics>
    <phDependence>
        <text evidence="2">Optimum pH is 7.5-8.0.</text>
    </phDependence>
</comment>
<comment type="pathway">
    <text>Aromatic compound metabolism; phenylpropanoid biosynthesis.</text>
</comment>
<comment type="tissue specificity">
    <text evidence="2">Highly expressed in developing fruits. Expressed at low levels in roots, young leaves, buds and flowers.</text>
</comment>
<comment type="miscellaneous">
    <text>The phenylpropene trans-anethole imparts the characteristic sweet aroma of anise seeds and leaves.</text>
</comment>
<comment type="similarity">
    <text evidence="1">Belongs to the class I-like SAM-binding methyltransferase superfamily. Cation-independent O-methyltransferase family. COMT subfamily.</text>
</comment>
<protein>
    <recommendedName>
        <fullName>Trans-anol O-methyltransferase 1</fullName>
        <shortName>T-anol O-methyltransferase 1</shortName>
        <ecNumber>2.1.1.279</ecNumber>
    </recommendedName>
    <alternativeName>
        <fullName>T-anol/isoeugenol O-methyltransferase 1</fullName>
        <shortName>PaAIMT1</shortName>
    </alternativeName>
</protein>
<feature type="chain" id="PRO_0000424082" description="Trans-anol O-methyltransferase 1">
    <location>
        <begin position="1"/>
        <end position="358"/>
    </location>
</feature>
<feature type="active site" description="Proton acceptor" evidence="1">
    <location>
        <position position="262"/>
    </location>
</feature>
<feature type="binding site" evidence="1">
    <location>
        <position position="201"/>
    </location>
    <ligand>
        <name>S-adenosyl-L-methionine</name>
        <dbReference type="ChEBI" id="CHEBI:59789"/>
    </ligand>
</feature>
<feature type="binding site" evidence="1">
    <location>
        <position position="224"/>
    </location>
    <ligand>
        <name>S-adenosyl-L-methionine</name>
        <dbReference type="ChEBI" id="CHEBI:59789"/>
    </ligand>
</feature>
<feature type="binding site" evidence="1">
    <location>
        <position position="244"/>
    </location>
    <ligand>
        <name>S-adenosyl-L-methionine</name>
        <dbReference type="ChEBI" id="CHEBI:59789"/>
    </ligand>
</feature>
<feature type="binding site" evidence="1">
    <location>
        <position position="245"/>
    </location>
    <ligand>
        <name>S-adenosyl-L-methionine</name>
        <dbReference type="ChEBI" id="CHEBI:59789"/>
    </ligand>
</feature>
<feature type="binding site" evidence="1">
    <location>
        <position position="259"/>
    </location>
    <ligand>
        <name>S-adenosyl-L-methionine</name>
        <dbReference type="ChEBI" id="CHEBI:59789"/>
    </ligand>
</feature>
<organism>
    <name type="scientific">Pimpinella anisum</name>
    <name type="common">Anise</name>
    <name type="synonym">Anisum vulgare</name>
    <dbReference type="NCBI Taxonomy" id="271192"/>
    <lineage>
        <taxon>Eukaryota</taxon>
        <taxon>Viridiplantae</taxon>
        <taxon>Streptophyta</taxon>
        <taxon>Embryophyta</taxon>
        <taxon>Tracheophyta</taxon>
        <taxon>Spermatophyta</taxon>
        <taxon>Magnoliopsida</taxon>
        <taxon>eudicotyledons</taxon>
        <taxon>Gunneridae</taxon>
        <taxon>Pentapetalae</taxon>
        <taxon>asterids</taxon>
        <taxon>campanulids</taxon>
        <taxon>Apiales</taxon>
        <taxon>Apiaceae</taxon>
        <taxon>Apioideae</taxon>
        <taxon>apioid superclade</taxon>
        <taxon>Pimpinelleae</taxon>
        <taxon>Pimpinella</taxon>
    </lineage>
</organism>
<accession>B8RCD3</accession>
<dbReference type="EC" id="2.1.1.279"/>
<dbReference type="EMBL" id="EU925389">
    <property type="protein sequence ID" value="ACL13527.1"/>
    <property type="molecule type" value="mRNA"/>
</dbReference>
<dbReference type="SMR" id="B8RCD3"/>
<dbReference type="KEGG" id="ag:ACL13527"/>
<dbReference type="BioCyc" id="MetaCyc:MONOMER-15433"/>
<dbReference type="BRENDA" id="2.1.1.279">
    <property type="organism ID" value="4840"/>
</dbReference>
<dbReference type="UniPathway" id="UPA00711"/>
<dbReference type="GO" id="GO:0050630">
    <property type="term" value="F:(iso)eugenol O-methyltransferase activity"/>
    <property type="evidence" value="ECO:0007669"/>
    <property type="project" value="RHEA"/>
</dbReference>
<dbReference type="GO" id="GO:0046983">
    <property type="term" value="F:protein dimerization activity"/>
    <property type="evidence" value="ECO:0007669"/>
    <property type="project" value="InterPro"/>
</dbReference>
<dbReference type="GO" id="GO:0032259">
    <property type="term" value="P:methylation"/>
    <property type="evidence" value="ECO:0007669"/>
    <property type="project" value="UniProtKB-KW"/>
</dbReference>
<dbReference type="GO" id="GO:0009699">
    <property type="term" value="P:phenylpropanoid biosynthetic process"/>
    <property type="evidence" value="ECO:0007669"/>
    <property type="project" value="UniProtKB-UniPathway"/>
</dbReference>
<dbReference type="FunFam" id="1.10.10.10:FF:000357">
    <property type="entry name" value="Caffeic acid 3-O-methyltransferase"/>
    <property type="match status" value="1"/>
</dbReference>
<dbReference type="Gene3D" id="3.40.50.150">
    <property type="entry name" value="Vaccinia Virus protein VP39"/>
    <property type="match status" value="1"/>
</dbReference>
<dbReference type="Gene3D" id="1.10.10.10">
    <property type="entry name" value="Winged helix-like DNA-binding domain superfamily/Winged helix DNA-binding domain"/>
    <property type="match status" value="1"/>
</dbReference>
<dbReference type="InterPro" id="IPR016461">
    <property type="entry name" value="COMT-like"/>
</dbReference>
<dbReference type="InterPro" id="IPR001077">
    <property type="entry name" value="O_MeTrfase_dom"/>
</dbReference>
<dbReference type="InterPro" id="IPR012967">
    <property type="entry name" value="Plant_O-MeTrfase_dimerisation"/>
</dbReference>
<dbReference type="InterPro" id="IPR029063">
    <property type="entry name" value="SAM-dependent_MTases_sf"/>
</dbReference>
<dbReference type="InterPro" id="IPR036388">
    <property type="entry name" value="WH-like_DNA-bd_sf"/>
</dbReference>
<dbReference type="InterPro" id="IPR036390">
    <property type="entry name" value="WH_DNA-bd_sf"/>
</dbReference>
<dbReference type="PANTHER" id="PTHR11746">
    <property type="entry name" value="O-METHYLTRANSFERASE"/>
    <property type="match status" value="1"/>
</dbReference>
<dbReference type="Pfam" id="PF08100">
    <property type="entry name" value="Dimerisation"/>
    <property type="match status" value="1"/>
</dbReference>
<dbReference type="Pfam" id="PF00891">
    <property type="entry name" value="Methyltransf_2"/>
    <property type="match status" value="1"/>
</dbReference>
<dbReference type="PIRSF" id="PIRSF005739">
    <property type="entry name" value="O-mtase"/>
    <property type="match status" value="1"/>
</dbReference>
<dbReference type="SUPFAM" id="SSF53335">
    <property type="entry name" value="S-adenosyl-L-methionine-dependent methyltransferases"/>
    <property type="match status" value="1"/>
</dbReference>
<dbReference type="SUPFAM" id="SSF46785">
    <property type="entry name" value="Winged helix' DNA-binding domain"/>
    <property type="match status" value="1"/>
</dbReference>
<dbReference type="PROSITE" id="PS51683">
    <property type="entry name" value="SAM_OMT_II"/>
    <property type="match status" value="1"/>
</dbReference>
<gene>
    <name type="primary">AIMT1</name>
</gene>
<keyword id="KW-0489">Methyltransferase</keyword>
<keyword id="KW-0587">Phenylpropanoid metabolism</keyword>
<keyword id="KW-0949">S-adenosyl-L-methionine</keyword>
<keyword id="KW-0808">Transferase</keyword>
<reference key="1">
    <citation type="journal article" date="2009" name="Plant Physiol.">
        <title>Biosynthesis of t-anethole in anise: characterization of t-anol/isoeugenol synthase and an O-methyltransferase specific for a C7-C8 propenyl side chain.</title>
        <authorList>
            <person name="Koeduka T."/>
            <person name="Baiga T.J."/>
            <person name="Noel J.P."/>
            <person name="Pichersky E."/>
        </authorList>
    </citation>
    <scope>NUCLEOTIDE SEQUENCE [MRNA]</scope>
    <scope>FUNCTION</scope>
    <scope>CATALYTIC ACTIVITY</scope>
    <scope>ACTIVITY REGULATION</scope>
    <scope>BIOPHYSICOCHEMICAL PROPERTIES</scope>
    <scope>TISSUE SPECIFICITY</scope>
</reference>